<feature type="chain" id="PRO_0000411835" description="Probable Xaa-Pro aminopeptidase AN0832">
    <location>
        <begin position="1"/>
        <end position="469"/>
    </location>
</feature>
<feature type="binding site" evidence="1">
    <location>
        <position position="260"/>
    </location>
    <ligand>
        <name>Mn(2+)</name>
        <dbReference type="ChEBI" id="CHEBI:29035"/>
        <label>2</label>
    </ligand>
</feature>
<feature type="binding site" evidence="1">
    <location>
        <position position="271"/>
    </location>
    <ligand>
        <name>Mn(2+)</name>
        <dbReference type="ChEBI" id="CHEBI:29035"/>
        <label>1</label>
    </ligand>
</feature>
<feature type="binding site" evidence="1">
    <location>
        <position position="271"/>
    </location>
    <ligand>
        <name>Mn(2+)</name>
        <dbReference type="ChEBI" id="CHEBI:29035"/>
        <label>2</label>
    </ligand>
</feature>
<feature type="binding site" evidence="1">
    <location>
        <position position="398"/>
    </location>
    <ligand>
        <name>Mn(2+)</name>
        <dbReference type="ChEBI" id="CHEBI:29035"/>
        <label>1</label>
    </ligand>
</feature>
<feature type="binding site" evidence="1">
    <location>
        <position position="437"/>
    </location>
    <ligand>
        <name>Mn(2+)</name>
        <dbReference type="ChEBI" id="CHEBI:29035"/>
        <label>1</label>
    </ligand>
</feature>
<feature type="binding site" evidence="1">
    <location>
        <position position="437"/>
    </location>
    <ligand>
        <name>Mn(2+)</name>
        <dbReference type="ChEBI" id="CHEBI:29035"/>
        <label>2</label>
    </ligand>
</feature>
<reference key="1">
    <citation type="journal article" date="2005" name="Nature">
        <title>Sequencing of Aspergillus nidulans and comparative analysis with A. fumigatus and A. oryzae.</title>
        <authorList>
            <person name="Galagan J.E."/>
            <person name="Calvo S.E."/>
            <person name="Cuomo C."/>
            <person name="Ma L.-J."/>
            <person name="Wortman J.R."/>
            <person name="Batzoglou S."/>
            <person name="Lee S.-I."/>
            <person name="Bastuerkmen M."/>
            <person name="Spevak C.C."/>
            <person name="Clutterbuck J."/>
            <person name="Kapitonov V."/>
            <person name="Jurka J."/>
            <person name="Scazzocchio C."/>
            <person name="Farman M.L."/>
            <person name="Butler J."/>
            <person name="Purcell S."/>
            <person name="Harris S."/>
            <person name="Braus G.H."/>
            <person name="Draht O."/>
            <person name="Busch S."/>
            <person name="D'Enfert C."/>
            <person name="Bouchier C."/>
            <person name="Goldman G.H."/>
            <person name="Bell-Pedersen D."/>
            <person name="Griffiths-Jones S."/>
            <person name="Doonan J.H."/>
            <person name="Yu J."/>
            <person name="Vienken K."/>
            <person name="Pain A."/>
            <person name="Freitag M."/>
            <person name="Selker E.U."/>
            <person name="Archer D.B."/>
            <person name="Penalva M.A."/>
            <person name="Oakley B.R."/>
            <person name="Momany M."/>
            <person name="Tanaka T."/>
            <person name="Kumagai T."/>
            <person name="Asai K."/>
            <person name="Machida M."/>
            <person name="Nierman W.C."/>
            <person name="Denning D.W."/>
            <person name="Caddick M.X."/>
            <person name="Hynes M."/>
            <person name="Paoletti M."/>
            <person name="Fischer R."/>
            <person name="Miller B.L."/>
            <person name="Dyer P.S."/>
            <person name="Sachs M.S."/>
            <person name="Osmani S.A."/>
            <person name="Birren B.W."/>
        </authorList>
    </citation>
    <scope>NUCLEOTIDE SEQUENCE [LARGE SCALE GENOMIC DNA]</scope>
    <source>
        <strain>FGSC A4 / ATCC 38163 / CBS 112.46 / NRRL 194 / M139</strain>
    </source>
</reference>
<reference key="2">
    <citation type="journal article" date="2009" name="Fungal Genet. Biol.">
        <title>The 2008 update of the Aspergillus nidulans genome annotation: a community effort.</title>
        <authorList>
            <person name="Wortman J.R."/>
            <person name="Gilsenan J.M."/>
            <person name="Joardar V."/>
            <person name="Deegan J."/>
            <person name="Clutterbuck J."/>
            <person name="Andersen M.R."/>
            <person name="Archer D."/>
            <person name="Bencina M."/>
            <person name="Braus G."/>
            <person name="Coutinho P."/>
            <person name="von Dohren H."/>
            <person name="Doonan J."/>
            <person name="Driessen A.J."/>
            <person name="Durek P."/>
            <person name="Espeso E."/>
            <person name="Fekete E."/>
            <person name="Flipphi M."/>
            <person name="Estrada C.G."/>
            <person name="Geysens S."/>
            <person name="Goldman G."/>
            <person name="de Groot P.W."/>
            <person name="Hansen K."/>
            <person name="Harris S.D."/>
            <person name="Heinekamp T."/>
            <person name="Helmstaedt K."/>
            <person name="Henrissat B."/>
            <person name="Hofmann G."/>
            <person name="Homan T."/>
            <person name="Horio T."/>
            <person name="Horiuchi H."/>
            <person name="James S."/>
            <person name="Jones M."/>
            <person name="Karaffa L."/>
            <person name="Karanyi Z."/>
            <person name="Kato M."/>
            <person name="Keller N."/>
            <person name="Kelly D.E."/>
            <person name="Kiel J.A."/>
            <person name="Kim J.M."/>
            <person name="van der Klei I.J."/>
            <person name="Klis F.M."/>
            <person name="Kovalchuk A."/>
            <person name="Krasevec N."/>
            <person name="Kubicek C.P."/>
            <person name="Liu B."/>
            <person name="Maccabe A."/>
            <person name="Meyer V."/>
            <person name="Mirabito P."/>
            <person name="Miskei M."/>
            <person name="Mos M."/>
            <person name="Mullins J."/>
            <person name="Nelson D.R."/>
            <person name="Nielsen J."/>
            <person name="Oakley B.R."/>
            <person name="Osmani S.A."/>
            <person name="Pakula T."/>
            <person name="Paszewski A."/>
            <person name="Paulsen I."/>
            <person name="Pilsyk S."/>
            <person name="Pocsi I."/>
            <person name="Punt P.J."/>
            <person name="Ram A.F."/>
            <person name="Ren Q."/>
            <person name="Robellet X."/>
            <person name="Robson G."/>
            <person name="Seiboth B."/>
            <person name="van Solingen P."/>
            <person name="Specht T."/>
            <person name="Sun J."/>
            <person name="Taheri-Talesh N."/>
            <person name="Takeshita N."/>
            <person name="Ussery D."/>
            <person name="vanKuyk P.A."/>
            <person name="Visser H."/>
            <person name="van de Vondervoort P.J."/>
            <person name="de Vries R.P."/>
            <person name="Walton J."/>
            <person name="Xiang X."/>
            <person name="Xiong Y."/>
            <person name="Zeng A.P."/>
            <person name="Brandt B.W."/>
            <person name="Cornell M.J."/>
            <person name="van den Hondel C.A."/>
            <person name="Visser J."/>
            <person name="Oliver S.G."/>
            <person name="Turner G."/>
        </authorList>
    </citation>
    <scope>GENOME REANNOTATION</scope>
    <source>
        <strain>FGSC A4 / ATCC 38163 / CBS 112.46 / NRRL 194 / M139</strain>
    </source>
</reference>
<comment type="function">
    <text evidence="1">Catalyzes the removal of a penultimate prolyl residue from the N-termini of peptides.</text>
</comment>
<comment type="catalytic activity">
    <reaction>
        <text>Release of any N-terminal amino acid, including proline, that is linked to proline, even from a dipeptide or tripeptide.</text>
        <dbReference type="EC" id="3.4.11.9"/>
    </reaction>
</comment>
<comment type="cofactor">
    <cofactor evidence="1">
        <name>Mn(2+)</name>
        <dbReference type="ChEBI" id="CHEBI:29035"/>
    </cofactor>
    <text evidence="1">Binds 2 manganese ions per subunit.</text>
</comment>
<comment type="similarity">
    <text evidence="2">Belongs to the peptidase M24B family.</text>
</comment>
<name>AMPP2_EMENI</name>
<organism>
    <name type="scientific">Emericella nidulans (strain FGSC A4 / ATCC 38163 / CBS 112.46 / NRRL 194 / M139)</name>
    <name type="common">Aspergillus nidulans</name>
    <dbReference type="NCBI Taxonomy" id="227321"/>
    <lineage>
        <taxon>Eukaryota</taxon>
        <taxon>Fungi</taxon>
        <taxon>Dikarya</taxon>
        <taxon>Ascomycota</taxon>
        <taxon>Pezizomycotina</taxon>
        <taxon>Eurotiomycetes</taxon>
        <taxon>Eurotiomycetidae</taxon>
        <taxon>Eurotiales</taxon>
        <taxon>Aspergillaceae</taxon>
        <taxon>Aspergillus</taxon>
        <taxon>Aspergillus subgen. Nidulantes</taxon>
    </lineage>
</organism>
<keyword id="KW-0031">Aminopeptidase</keyword>
<keyword id="KW-0378">Hydrolase</keyword>
<keyword id="KW-0464">Manganese</keyword>
<keyword id="KW-0479">Metal-binding</keyword>
<keyword id="KW-0482">Metalloprotease</keyword>
<keyword id="KW-0645">Protease</keyword>
<keyword id="KW-1185">Reference proteome</keyword>
<accession>Q5BF48</accession>
<accession>C8VQE3</accession>
<protein>
    <recommendedName>
        <fullName>Probable Xaa-Pro aminopeptidase AN0832</fullName>
        <ecNumber>3.4.11.9</ecNumber>
    </recommendedName>
    <alternativeName>
        <fullName>Aminoacylproline aminopeptidase</fullName>
    </alternativeName>
    <alternativeName>
        <fullName>Prolidase</fullName>
    </alternativeName>
</protein>
<dbReference type="EC" id="3.4.11.9"/>
<dbReference type="EMBL" id="AACD01000013">
    <property type="protein sequence ID" value="EAA65662.1"/>
    <property type="molecule type" value="Genomic_DNA"/>
</dbReference>
<dbReference type="EMBL" id="BN001308">
    <property type="protein sequence ID" value="CBF88697.1"/>
    <property type="molecule type" value="Genomic_DNA"/>
</dbReference>
<dbReference type="RefSeq" id="XP_658436.1">
    <property type="nucleotide sequence ID" value="XM_653344.1"/>
</dbReference>
<dbReference type="SMR" id="Q5BF48"/>
<dbReference type="STRING" id="227321.Q5BF48"/>
<dbReference type="EnsemblFungi" id="CBF88697">
    <property type="protein sequence ID" value="CBF88697"/>
    <property type="gene ID" value="ANIA_00832"/>
</dbReference>
<dbReference type="KEGG" id="ani:ANIA_00832"/>
<dbReference type="VEuPathDB" id="FungiDB:AN0832"/>
<dbReference type="eggNOG" id="KOG2737">
    <property type="taxonomic scope" value="Eukaryota"/>
</dbReference>
<dbReference type="HOGENOM" id="CLU_017266_1_2_1"/>
<dbReference type="InParanoid" id="Q5BF48"/>
<dbReference type="OMA" id="YELRMIR"/>
<dbReference type="OrthoDB" id="10261878at2759"/>
<dbReference type="Proteomes" id="UP000000560">
    <property type="component" value="Chromosome VIII"/>
</dbReference>
<dbReference type="GO" id="GO:0030145">
    <property type="term" value="F:manganese ion binding"/>
    <property type="evidence" value="ECO:0007669"/>
    <property type="project" value="InterPro"/>
</dbReference>
<dbReference type="GO" id="GO:0070006">
    <property type="term" value="F:metalloaminopeptidase activity"/>
    <property type="evidence" value="ECO:0007669"/>
    <property type="project" value="InterPro"/>
</dbReference>
<dbReference type="GO" id="GO:0008233">
    <property type="term" value="F:peptidase activity"/>
    <property type="evidence" value="ECO:0000318"/>
    <property type="project" value="GO_Central"/>
</dbReference>
<dbReference type="GO" id="GO:0006508">
    <property type="term" value="P:proteolysis"/>
    <property type="evidence" value="ECO:0000318"/>
    <property type="project" value="GO_Central"/>
</dbReference>
<dbReference type="CDD" id="cd01087">
    <property type="entry name" value="Prolidase"/>
    <property type="match status" value="1"/>
</dbReference>
<dbReference type="Gene3D" id="3.90.230.10">
    <property type="entry name" value="Creatinase/methionine aminopeptidase superfamily"/>
    <property type="match status" value="1"/>
</dbReference>
<dbReference type="InterPro" id="IPR007865">
    <property type="entry name" value="Aminopep_P_N"/>
</dbReference>
<dbReference type="InterPro" id="IPR029149">
    <property type="entry name" value="Creatin/AminoP/Spt16_N"/>
</dbReference>
<dbReference type="InterPro" id="IPR036005">
    <property type="entry name" value="Creatinase/aminopeptidase-like"/>
</dbReference>
<dbReference type="InterPro" id="IPR000994">
    <property type="entry name" value="Pept_M24"/>
</dbReference>
<dbReference type="InterPro" id="IPR001131">
    <property type="entry name" value="Peptidase_M24B_aminopep-P_CS"/>
</dbReference>
<dbReference type="InterPro" id="IPR052433">
    <property type="entry name" value="X-Pro_dipept-like"/>
</dbReference>
<dbReference type="PANTHER" id="PTHR43226">
    <property type="entry name" value="XAA-PRO AMINOPEPTIDASE 3"/>
    <property type="match status" value="1"/>
</dbReference>
<dbReference type="PANTHER" id="PTHR43226:SF3">
    <property type="entry name" value="XAA-PRO AMINOPEPTIDASE AN0832-RELATED"/>
    <property type="match status" value="1"/>
</dbReference>
<dbReference type="Pfam" id="PF05195">
    <property type="entry name" value="AMP_N"/>
    <property type="match status" value="1"/>
</dbReference>
<dbReference type="Pfam" id="PF00557">
    <property type="entry name" value="Peptidase_M24"/>
    <property type="match status" value="1"/>
</dbReference>
<dbReference type="SMART" id="SM01011">
    <property type="entry name" value="AMP_N"/>
    <property type="match status" value="1"/>
</dbReference>
<dbReference type="SUPFAM" id="SSF55920">
    <property type="entry name" value="Creatinase/aminopeptidase"/>
    <property type="match status" value="1"/>
</dbReference>
<dbReference type="SUPFAM" id="SSF53092">
    <property type="entry name" value="Creatinase/prolidase N-terminal domain"/>
    <property type="match status" value="1"/>
</dbReference>
<dbReference type="PROSITE" id="PS00491">
    <property type="entry name" value="PROLINE_PEPTIDASE"/>
    <property type="match status" value="1"/>
</dbReference>
<gene>
    <name type="ORF">AN0832</name>
</gene>
<sequence>MRVSDPAKLDILPDDACEIRLTIAASECDKYPAKQHARKVASKLGVRDGLIYLVGKATINWGDSDQPRPFRQRRYFYYLSGVDEADCYLTYDIRNDLLTIYVPNFSLQHAIWMGPTLTVEEARQRYDADRFRYYAALRSDLNSWVDQYNKDSPIYVLHSSQKPEISAKELRSREVKDEYEIRMIRKANEISALAHRNILQNIHRMSNESEIEGLFLDTCVSHGAKNQSYEIIAGSGPNAAVLHYVKNDEPLNGRQLVCLDAGAEWNCYASDVTRTIPLGKDWPSSHAKDIYAIVEEMQEECIRRVKPGLRFRDLHELAHIIAIKGLQELGVLKAGTVEEIRRSGASSIFFPHGLGHHVGLEVHDVSEQPITANGHLSREFVPQMSTPLLQEGMVITIEPGVYFNKLALENSRSLPLAKYIDFDKAEQYIPVGGVRIEDDLLVTSTGYENLTMAPKGKEMLEILRGRSKQ</sequence>
<proteinExistence type="inferred from homology"/>
<evidence type="ECO:0000250" key="1"/>
<evidence type="ECO:0000305" key="2"/>